<comment type="function">
    <text evidence="1">Binds to 23S rRNA. Forms part of two intersubunit bridges in the 70S ribosome.</text>
</comment>
<comment type="subunit">
    <text evidence="1">Part of the 50S ribosomal subunit. Forms a cluster with proteins L3 and L19. In the 70S ribosome, L14 and L19 interact and together make contacts with the 16S rRNA in bridges B5 and B8.</text>
</comment>
<comment type="similarity">
    <text evidence="1">Belongs to the universal ribosomal protein uL14 family.</text>
</comment>
<proteinExistence type="inferred from homology"/>
<evidence type="ECO:0000255" key="1">
    <source>
        <dbReference type="HAMAP-Rule" id="MF_01367"/>
    </source>
</evidence>
<evidence type="ECO:0000305" key="2"/>
<dbReference type="EMBL" id="CP000001">
    <property type="protein sequence ID" value="AAU20117.1"/>
    <property type="molecule type" value="Genomic_DNA"/>
</dbReference>
<dbReference type="RefSeq" id="WP_000615912.1">
    <property type="nucleotide sequence ID" value="NZ_CP009968.1"/>
</dbReference>
<dbReference type="SMR" id="Q63H80"/>
<dbReference type="GeneID" id="93010933"/>
<dbReference type="KEGG" id="bcz:BCE33L0114"/>
<dbReference type="PATRIC" id="fig|288681.22.peg.37"/>
<dbReference type="Proteomes" id="UP000002612">
    <property type="component" value="Chromosome"/>
</dbReference>
<dbReference type="GO" id="GO:0022625">
    <property type="term" value="C:cytosolic large ribosomal subunit"/>
    <property type="evidence" value="ECO:0007669"/>
    <property type="project" value="TreeGrafter"/>
</dbReference>
<dbReference type="GO" id="GO:0070180">
    <property type="term" value="F:large ribosomal subunit rRNA binding"/>
    <property type="evidence" value="ECO:0007669"/>
    <property type="project" value="TreeGrafter"/>
</dbReference>
<dbReference type="GO" id="GO:0003735">
    <property type="term" value="F:structural constituent of ribosome"/>
    <property type="evidence" value="ECO:0007669"/>
    <property type="project" value="InterPro"/>
</dbReference>
<dbReference type="GO" id="GO:0006412">
    <property type="term" value="P:translation"/>
    <property type="evidence" value="ECO:0007669"/>
    <property type="project" value="UniProtKB-UniRule"/>
</dbReference>
<dbReference type="CDD" id="cd00337">
    <property type="entry name" value="Ribosomal_uL14"/>
    <property type="match status" value="1"/>
</dbReference>
<dbReference type="FunFam" id="2.40.150.20:FF:000001">
    <property type="entry name" value="50S ribosomal protein L14"/>
    <property type="match status" value="1"/>
</dbReference>
<dbReference type="Gene3D" id="2.40.150.20">
    <property type="entry name" value="Ribosomal protein L14"/>
    <property type="match status" value="1"/>
</dbReference>
<dbReference type="HAMAP" id="MF_01367">
    <property type="entry name" value="Ribosomal_uL14"/>
    <property type="match status" value="1"/>
</dbReference>
<dbReference type="InterPro" id="IPR000218">
    <property type="entry name" value="Ribosomal_uL14"/>
</dbReference>
<dbReference type="InterPro" id="IPR005745">
    <property type="entry name" value="Ribosomal_uL14_bac-type"/>
</dbReference>
<dbReference type="InterPro" id="IPR019972">
    <property type="entry name" value="Ribosomal_uL14_CS"/>
</dbReference>
<dbReference type="InterPro" id="IPR036853">
    <property type="entry name" value="Ribosomal_uL14_sf"/>
</dbReference>
<dbReference type="NCBIfam" id="TIGR01067">
    <property type="entry name" value="rplN_bact"/>
    <property type="match status" value="1"/>
</dbReference>
<dbReference type="PANTHER" id="PTHR11761">
    <property type="entry name" value="50S/60S RIBOSOMAL PROTEIN L14/L23"/>
    <property type="match status" value="1"/>
</dbReference>
<dbReference type="PANTHER" id="PTHR11761:SF3">
    <property type="entry name" value="LARGE RIBOSOMAL SUBUNIT PROTEIN UL14M"/>
    <property type="match status" value="1"/>
</dbReference>
<dbReference type="Pfam" id="PF00238">
    <property type="entry name" value="Ribosomal_L14"/>
    <property type="match status" value="1"/>
</dbReference>
<dbReference type="SMART" id="SM01374">
    <property type="entry name" value="Ribosomal_L14"/>
    <property type="match status" value="1"/>
</dbReference>
<dbReference type="SUPFAM" id="SSF50193">
    <property type="entry name" value="Ribosomal protein L14"/>
    <property type="match status" value="1"/>
</dbReference>
<dbReference type="PROSITE" id="PS00049">
    <property type="entry name" value="RIBOSOMAL_L14"/>
    <property type="match status" value="1"/>
</dbReference>
<accession>Q63H80</accession>
<keyword id="KW-0687">Ribonucleoprotein</keyword>
<keyword id="KW-0689">Ribosomal protein</keyword>
<keyword id="KW-0694">RNA-binding</keyword>
<keyword id="KW-0699">rRNA-binding</keyword>
<reference key="1">
    <citation type="journal article" date="2006" name="J. Bacteriol.">
        <title>Pathogenomic sequence analysis of Bacillus cereus and Bacillus thuringiensis isolates closely related to Bacillus anthracis.</title>
        <authorList>
            <person name="Han C.S."/>
            <person name="Xie G."/>
            <person name="Challacombe J.F."/>
            <person name="Altherr M.R."/>
            <person name="Bhotika S.S."/>
            <person name="Bruce D."/>
            <person name="Campbell C.S."/>
            <person name="Campbell M.L."/>
            <person name="Chen J."/>
            <person name="Chertkov O."/>
            <person name="Cleland C."/>
            <person name="Dimitrijevic M."/>
            <person name="Doggett N.A."/>
            <person name="Fawcett J.J."/>
            <person name="Glavina T."/>
            <person name="Goodwin L.A."/>
            <person name="Hill K.K."/>
            <person name="Hitchcock P."/>
            <person name="Jackson P.J."/>
            <person name="Keim P."/>
            <person name="Kewalramani A.R."/>
            <person name="Longmire J."/>
            <person name="Lucas S."/>
            <person name="Malfatti S."/>
            <person name="McMurry K."/>
            <person name="Meincke L.J."/>
            <person name="Misra M."/>
            <person name="Moseman B.L."/>
            <person name="Mundt M."/>
            <person name="Munk A.C."/>
            <person name="Okinaka R.T."/>
            <person name="Parson-Quintana B."/>
            <person name="Reilly L.P."/>
            <person name="Richardson P."/>
            <person name="Robinson D.L."/>
            <person name="Rubin E."/>
            <person name="Saunders E."/>
            <person name="Tapia R."/>
            <person name="Tesmer J.G."/>
            <person name="Thayer N."/>
            <person name="Thompson L.S."/>
            <person name="Tice H."/>
            <person name="Ticknor L.O."/>
            <person name="Wills P.L."/>
            <person name="Brettin T.S."/>
            <person name="Gilna P."/>
        </authorList>
    </citation>
    <scope>NUCLEOTIDE SEQUENCE [LARGE SCALE GENOMIC DNA]</scope>
    <source>
        <strain>ZK / E33L</strain>
    </source>
</reference>
<protein>
    <recommendedName>
        <fullName evidence="1">Large ribosomal subunit protein uL14</fullName>
    </recommendedName>
    <alternativeName>
        <fullName evidence="2">50S ribosomal protein L14</fullName>
    </alternativeName>
</protein>
<gene>
    <name evidence="1" type="primary">rplN</name>
    <name type="ordered locus">BCE33L0114</name>
</gene>
<name>RL14_BACCZ</name>
<organism>
    <name type="scientific">Bacillus cereus (strain ZK / E33L)</name>
    <dbReference type="NCBI Taxonomy" id="288681"/>
    <lineage>
        <taxon>Bacteria</taxon>
        <taxon>Bacillati</taxon>
        <taxon>Bacillota</taxon>
        <taxon>Bacilli</taxon>
        <taxon>Bacillales</taxon>
        <taxon>Bacillaceae</taxon>
        <taxon>Bacillus</taxon>
        <taxon>Bacillus cereus group</taxon>
    </lineage>
</organism>
<feature type="chain" id="PRO_1000055513" description="Large ribosomal subunit protein uL14">
    <location>
        <begin position="1"/>
        <end position="122"/>
    </location>
</feature>
<sequence>MIQQESRLKVADNSGARELLTIKVLGGSGRKYANIGDIIVATVKQATPGGVVKKGDVVKAVVVRTKSGARRPDGSYIKFDENAAVIIKDDKSPRGTRIFGPVARELRDSNFMKIVSLAPEVL</sequence>